<reference key="1">
    <citation type="journal article" date="1995" name="Biochim. Biophys. Acta">
        <title>Molecular cloning of PEPT 2, a new member of the H+/peptide cotransporter family, from human kidney.</title>
        <authorList>
            <person name="Liu W."/>
            <person name="Liang R."/>
            <person name="Ramamoorthy S."/>
            <person name="Fei Y.J."/>
            <person name="Ganapathy M.E."/>
            <person name="Hediger M.A."/>
            <person name="Ganapathy V."/>
            <person name="Leibach F.H."/>
        </authorList>
    </citation>
    <scope>NUCLEOTIDE SEQUENCE [MRNA] (ISOFORM 1)</scope>
    <scope>FUNCTION</scope>
    <scope>SUBCELLULAR LOCATION</scope>
    <scope>TISSUE SPECIFICITY</scope>
    <source>
        <tissue>Kidney</tissue>
    </source>
</reference>
<reference key="2">
    <citation type="journal article" date="2004" name="Nat. Genet.">
        <title>Complete sequencing and characterization of 21,243 full-length human cDNAs.</title>
        <authorList>
            <person name="Ota T."/>
            <person name="Suzuki Y."/>
            <person name="Nishikawa T."/>
            <person name="Otsuki T."/>
            <person name="Sugiyama T."/>
            <person name="Irie R."/>
            <person name="Wakamatsu A."/>
            <person name="Hayashi K."/>
            <person name="Sato H."/>
            <person name="Nagai K."/>
            <person name="Kimura K."/>
            <person name="Makita H."/>
            <person name="Sekine M."/>
            <person name="Obayashi M."/>
            <person name="Nishi T."/>
            <person name="Shibahara T."/>
            <person name="Tanaka T."/>
            <person name="Ishii S."/>
            <person name="Yamamoto J."/>
            <person name="Saito K."/>
            <person name="Kawai Y."/>
            <person name="Isono Y."/>
            <person name="Nakamura Y."/>
            <person name="Nagahari K."/>
            <person name="Murakami K."/>
            <person name="Yasuda T."/>
            <person name="Iwayanagi T."/>
            <person name="Wagatsuma M."/>
            <person name="Shiratori A."/>
            <person name="Sudo H."/>
            <person name="Hosoiri T."/>
            <person name="Kaku Y."/>
            <person name="Kodaira H."/>
            <person name="Kondo H."/>
            <person name="Sugawara M."/>
            <person name="Takahashi M."/>
            <person name="Kanda K."/>
            <person name="Yokoi T."/>
            <person name="Furuya T."/>
            <person name="Kikkawa E."/>
            <person name="Omura Y."/>
            <person name="Abe K."/>
            <person name="Kamihara K."/>
            <person name="Katsuta N."/>
            <person name="Sato K."/>
            <person name="Tanikawa M."/>
            <person name="Yamazaki M."/>
            <person name="Ninomiya K."/>
            <person name="Ishibashi T."/>
            <person name="Yamashita H."/>
            <person name="Murakawa K."/>
            <person name="Fujimori K."/>
            <person name="Tanai H."/>
            <person name="Kimata M."/>
            <person name="Watanabe M."/>
            <person name="Hiraoka S."/>
            <person name="Chiba Y."/>
            <person name="Ishida S."/>
            <person name="Ono Y."/>
            <person name="Takiguchi S."/>
            <person name="Watanabe S."/>
            <person name="Yosida M."/>
            <person name="Hotuta T."/>
            <person name="Kusano J."/>
            <person name="Kanehori K."/>
            <person name="Takahashi-Fujii A."/>
            <person name="Hara H."/>
            <person name="Tanase T.-O."/>
            <person name="Nomura Y."/>
            <person name="Togiya S."/>
            <person name="Komai F."/>
            <person name="Hara R."/>
            <person name="Takeuchi K."/>
            <person name="Arita M."/>
            <person name="Imose N."/>
            <person name="Musashino K."/>
            <person name="Yuuki H."/>
            <person name="Oshima A."/>
            <person name="Sasaki N."/>
            <person name="Aotsuka S."/>
            <person name="Yoshikawa Y."/>
            <person name="Matsunawa H."/>
            <person name="Ichihara T."/>
            <person name="Shiohata N."/>
            <person name="Sano S."/>
            <person name="Moriya S."/>
            <person name="Momiyama H."/>
            <person name="Satoh N."/>
            <person name="Takami S."/>
            <person name="Terashima Y."/>
            <person name="Suzuki O."/>
            <person name="Nakagawa S."/>
            <person name="Senoh A."/>
            <person name="Mizoguchi H."/>
            <person name="Goto Y."/>
            <person name="Shimizu F."/>
            <person name="Wakebe H."/>
            <person name="Hishigaki H."/>
            <person name="Watanabe T."/>
            <person name="Sugiyama A."/>
            <person name="Takemoto M."/>
            <person name="Kawakami B."/>
            <person name="Yamazaki M."/>
            <person name="Watanabe K."/>
            <person name="Kumagai A."/>
            <person name="Itakura S."/>
            <person name="Fukuzumi Y."/>
            <person name="Fujimori Y."/>
            <person name="Komiyama M."/>
            <person name="Tashiro H."/>
            <person name="Tanigami A."/>
            <person name="Fujiwara T."/>
            <person name="Ono T."/>
            <person name="Yamada K."/>
            <person name="Fujii Y."/>
            <person name="Ozaki K."/>
            <person name="Hirao M."/>
            <person name="Ohmori Y."/>
            <person name="Kawabata A."/>
            <person name="Hikiji T."/>
            <person name="Kobatake N."/>
            <person name="Inagaki H."/>
            <person name="Ikema Y."/>
            <person name="Okamoto S."/>
            <person name="Okitani R."/>
            <person name="Kawakami T."/>
            <person name="Noguchi S."/>
            <person name="Itoh T."/>
            <person name="Shigeta K."/>
            <person name="Senba T."/>
            <person name="Matsumura K."/>
            <person name="Nakajima Y."/>
            <person name="Mizuno T."/>
            <person name="Morinaga M."/>
            <person name="Sasaki M."/>
            <person name="Togashi T."/>
            <person name="Oyama M."/>
            <person name="Hata H."/>
            <person name="Watanabe M."/>
            <person name="Komatsu T."/>
            <person name="Mizushima-Sugano J."/>
            <person name="Satoh T."/>
            <person name="Shirai Y."/>
            <person name="Takahashi Y."/>
            <person name="Nakagawa K."/>
            <person name="Okumura K."/>
            <person name="Nagase T."/>
            <person name="Nomura N."/>
            <person name="Kikuchi H."/>
            <person name="Masuho Y."/>
            <person name="Yamashita R."/>
            <person name="Nakai K."/>
            <person name="Yada T."/>
            <person name="Nakamura Y."/>
            <person name="Ohara O."/>
            <person name="Isogai T."/>
            <person name="Sugano S."/>
        </authorList>
    </citation>
    <scope>NUCLEOTIDE SEQUENCE [LARGE SCALE MRNA] (ISOFORMS 1 AND 2)</scope>
    <source>
        <tissue>Brain</tissue>
        <tissue>Trachea</tissue>
    </source>
</reference>
<reference key="3">
    <citation type="journal article" date="2006" name="Nature">
        <title>The DNA sequence, annotation and analysis of human chromosome 3.</title>
        <authorList>
            <person name="Muzny D.M."/>
            <person name="Scherer S.E."/>
            <person name="Kaul R."/>
            <person name="Wang J."/>
            <person name="Yu J."/>
            <person name="Sudbrak R."/>
            <person name="Buhay C.J."/>
            <person name="Chen R."/>
            <person name="Cree A."/>
            <person name="Ding Y."/>
            <person name="Dugan-Rocha S."/>
            <person name="Gill R."/>
            <person name="Gunaratne P."/>
            <person name="Harris R.A."/>
            <person name="Hawes A.C."/>
            <person name="Hernandez J."/>
            <person name="Hodgson A.V."/>
            <person name="Hume J."/>
            <person name="Jackson A."/>
            <person name="Khan Z.M."/>
            <person name="Kovar-Smith C."/>
            <person name="Lewis L.R."/>
            <person name="Lozado R.J."/>
            <person name="Metzker M.L."/>
            <person name="Milosavljevic A."/>
            <person name="Miner G.R."/>
            <person name="Morgan M.B."/>
            <person name="Nazareth L.V."/>
            <person name="Scott G."/>
            <person name="Sodergren E."/>
            <person name="Song X.-Z."/>
            <person name="Steffen D."/>
            <person name="Wei S."/>
            <person name="Wheeler D.A."/>
            <person name="Wright M.W."/>
            <person name="Worley K.C."/>
            <person name="Yuan Y."/>
            <person name="Zhang Z."/>
            <person name="Adams C.Q."/>
            <person name="Ansari-Lari M.A."/>
            <person name="Ayele M."/>
            <person name="Brown M.J."/>
            <person name="Chen G."/>
            <person name="Chen Z."/>
            <person name="Clendenning J."/>
            <person name="Clerc-Blankenburg K.P."/>
            <person name="Chen R."/>
            <person name="Chen Z."/>
            <person name="Davis C."/>
            <person name="Delgado O."/>
            <person name="Dinh H.H."/>
            <person name="Dong W."/>
            <person name="Draper H."/>
            <person name="Ernst S."/>
            <person name="Fu G."/>
            <person name="Gonzalez-Garay M.L."/>
            <person name="Garcia D.K."/>
            <person name="Gillett W."/>
            <person name="Gu J."/>
            <person name="Hao B."/>
            <person name="Haugen E."/>
            <person name="Havlak P."/>
            <person name="He X."/>
            <person name="Hennig S."/>
            <person name="Hu S."/>
            <person name="Huang W."/>
            <person name="Jackson L.R."/>
            <person name="Jacob L.S."/>
            <person name="Kelly S.H."/>
            <person name="Kube M."/>
            <person name="Levy R."/>
            <person name="Li Z."/>
            <person name="Liu B."/>
            <person name="Liu J."/>
            <person name="Liu W."/>
            <person name="Lu J."/>
            <person name="Maheshwari M."/>
            <person name="Nguyen B.-V."/>
            <person name="Okwuonu G.O."/>
            <person name="Palmeiri A."/>
            <person name="Pasternak S."/>
            <person name="Perez L.M."/>
            <person name="Phelps K.A."/>
            <person name="Plopper F.J."/>
            <person name="Qiang B."/>
            <person name="Raymond C."/>
            <person name="Rodriguez R."/>
            <person name="Saenphimmachak C."/>
            <person name="Santibanez J."/>
            <person name="Shen H."/>
            <person name="Shen Y."/>
            <person name="Subramanian S."/>
            <person name="Tabor P.E."/>
            <person name="Verduzco D."/>
            <person name="Waldron L."/>
            <person name="Wang J."/>
            <person name="Wang J."/>
            <person name="Wang Q."/>
            <person name="Williams G.A."/>
            <person name="Wong G.K.-S."/>
            <person name="Yao Z."/>
            <person name="Zhang J."/>
            <person name="Zhang X."/>
            <person name="Zhao G."/>
            <person name="Zhou J."/>
            <person name="Zhou Y."/>
            <person name="Nelson D."/>
            <person name="Lehrach H."/>
            <person name="Reinhardt R."/>
            <person name="Naylor S.L."/>
            <person name="Yang H."/>
            <person name="Olson M."/>
            <person name="Weinstock G."/>
            <person name="Gibbs R.A."/>
        </authorList>
    </citation>
    <scope>NUCLEOTIDE SEQUENCE [LARGE SCALE GENOMIC DNA]</scope>
</reference>
<reference key="4">
    <citation type="submission" date="2005-09" db="EMBL/GenBank/DDBJ databases">
        <authorList>
            <person name="Mural R.J."/>
            <person name="Istrail S."/>
            <person name="Sutton G.G."/>
            <person name="Florea L."/>
            <person name="Halpern A.L."/>
            <person name="Mobarry C.M."/>
            <person name="Lippert R."/>
            <person name="Walenz B."/>
            <person name="Shatkay H."/>
            <person name="Dew I."/>
            <person name="Miller J.R."/>
            <person name="Flanigan M.J."/>
            <person name="Edwards N.J."/>
            <person name="Bolanos R."/>
            <person name="Fasulo D."/>
            <person name="Halldorsson B.V."/>
            <person name="Hannenhalli S."/>
            <person name="Turner R."/>
            <person name="Yooseph S."/>
            <person name="Lu F."/>
            <person name="Nusskern D.R."/>
            <person name="Shue B.C."/>
            <person name="Zheng X.H."/>
            <person name="Zhong F."/>
            <person name="Delcher A.L."/>
            <person name="Huson D.H."/>
            <person name="Kravitz S.A."/>
            <person name="Mouchard L."/>
            <person name="Reinert K."/>
            <person name="Remington K.A."/>
            <person name="Clark A.G."/>
            <person name="Waterman M.S."/>
            <person name="Eichler E.E."/>
            <person name="Adams M.D."/>
            <person name="Hunkapiller M.W."/>
            <person name="Myers E.W."/>
            <person name="Venter J.C."/>
        </authorList>
    </citation>
    <scope>NUCLEOTIDE SEQUENCE [LARGE SCALE GENOMIC DNA]</scope>
</reference>
<reference key="5">
    <citation type="journal article" date="2006" name="Drug Metab. Dispos.">
        <title>Interactions of amoxicillin and cefaclor with human renal organic anion and peptide transporters.</title>
        <authorList>
            <person name="Li M."/>
            <person name="Anderson G.D."/>
            <person name="Phillips B.R."/>
            <person name="Kong W."/>
            <person name="Shen D.D."/>
            <person name="Wang J."/>
        </authorList>
    </citation>
    <scope>FUNCTION</scope>
    <scope>TRANSPORTER ACTIVITY</scope>
    <scope>BIOPHYSICOCHEMICAL PROPERTIES</scope>
</reference>
<reference key="6">
    <citation type="journal article" date="2008" name="Am. J. Physiol.">
        <title>Molecular mechanism of dipeptide and drug transport by the human renal H+/oligopeptide cotransporter hPEPT2.</title>
        <authorList>
            <person name="Sala-Rabanal M."/>
            <person name="Loo D.D."/>
            <person name="Hirayama B.A."/>
            <person name="Wright E.M."/>
        </authorList>
    </citation>
    <scope>FUNCTION</scope>
    <scope>TRANSPORTER ACTIVITY</scope>
    <scope>POLYMORPHISM</scope>
    <scope>CHARACTERIZATION OF VARIANTS PHE-350; SER-409 AND LYS-509</scope>
    <scope>BIOPHYSICOCHEMICAL PROPERTIES</scope>
</reference>
<reference key="7">
    <citation type="journal article" date="2010" name="J. Biol. Chem.">
        <title>Identification of Drosophila Yin and PEPT2 as evolutionarily conserved phagosome-associated muramyl dipeptide transporters.</title>
        <authorList>
            <person name="Charriere G.M."/>
            <person name="Ip W.E."/>
            <person name="Dejardin S."/>
            <person name="Boyer L."/>
            <person name="Sokolovska A."/>
            <person name="Cappillino M.P."/>
            <person name="Cherayil B.J."/>
            <person name="Podolsky D.K."/>
            <person name="Kobayashi K.S."/>
            <person name="Silverman N."/>
            <person name="Lacy-Hulbert A."/>
            <person name="Stuart L.M."/>
        </authorList>
    </citation>
    <scope>FUNCTION</scope>
    <scope>TRANSPORTER ACTIVITY</scope>
    <scope>SUBCELLULAR LOCATION</scope>
    <scope>TISSUE SPECIFICITY</scope>
</reference>
<reference key="8">
    <citation type="journal article" date="2019" name="Amino Acids">
        <title>The proton-coupled oligopeptide transporters PEPT2, PHT1 and PHT2 mediate the uptake of carnosine in glioblastoma cells.</title>
        <authorList>
            <person name="Oppermann H."/>
            <person name="Heinrich M."/>
            <person name="Birkemeyer C."/>
            <person name="Meixensberger J."/>
            <person name="Gaunitz F."/>
        </authorList>
    </citation>
    <scope>FUNCTION</scope>
    <scope>TRANSPORTER ACTIVITY</scope>
</reference>
<accession>Q16348</accession>
<accession>A8K1A5</accession>
<accession>B4E2A7</accession>
<organism>
    <name type="scientific">Homo sapiens</name>
    <name type="common">Human</name>
    <dbReference type="NCBI Taxonomy" id="9606"/>
    <lineage>
        <taxon>Eukaryota</taxon>
        <taxon>Metazoa</taxon>
        <taxon>Chordata</taxon>
        <taxon>Craniata</taxon>
        <taxon>Vertebrata</taxon>
        <taxon>Euteleostomi</taxon>
        <taxon>Mammalia</taxon>
        <taxon>Eutheria</taxon>
        <taxon>Euarchontoglires</taxon>
        <taxon>Primates</taxon>
        <taxon>Haplorrhini</taxon>
        <taxon>Catarrhini</taxon>
        <taxon>Hominidae</taxon>
        <taxon>Homo</taxon>
    </lineage>
</organism>
<feature type="chain" id="PRO_0000064308" description="Solute carrier family 15 member 2">
    <location>
        <begin position="1"/>
        <end position="729"/>
    </location>
</feature>
<feature type="topological domain" description="Cytoplasmic" evidence="14">
    <location>
        <begin position="1"/>
        <end position="57"/>
    </location>
</feature>
<feature type="transmembrane region" description="Helical" evidence="4">
    <location>
        <begin position="58"/>
        <end position="78"/>
    </location>
</feature>
<feature type="topological domain" description="Extracellular" evidence="14">
    <location>
        <begin position="79"/>
        <end position="83"/>
    </location>
</feature>
<feature type="transmembrane region" description="Helical" evidence="4">
    <location>
        <begin position="84"/>
        <end position="104"/>
    </location>
</feature>
<feature type="topological domain" description="Cytoplasmic" evidence="14">
    <location>
        <begin position="105"/>
        <end position="113"/>
    </location>
</feature>
<feature type="transmembrane region" description="Helical" evidence="4">
    <location>
        <begin position="114"/>
        <end position="134"/>
    </location>
</feature>
<feature type="topological domain" description="Extracellular" evidence="14">
    <location>
        <begin position="135"/>
        <end position="139"/>
    </location>
</feature>
<feature type="transmembrane region" description="Helical" evidence="4">
    <location>
        <begin position="140"/>
        <end position="160"/>
    </location>
</feature>
<feature type="topological domain" description="Cytoplasmic" evidence="14">
    <location>
        <begin position="161"/>
        <end position="183"/>
    </location>
</feature>
<feature type="transmembrane region" description="Helical" evidence="4">
    <location>
        <begin position="184"/>
        <end position="204"/>
    </location>
</feature>
<feature type="topological domain" description="Extracellular" evidence="14">
    <location>
        <begin position="205"/>
        <end position="217"/>
    </location>
</feature>
<feature type="transmembrane region" description="Helical" evidence="4">
    <location>
        <begin position="218"/>
        <end position="238"/>
    </location>
</feature>
<feature type="topological domain" description="Cytoplasmic" evidence="14">
    <location>
        <begin position="239"/>
        <end position="295"/>
    </location>
</feature>
<feature type="transmembrane region" description="Helical" evidence="4">
    <location>
        <begin position="296"/>
        <end position="316"/>
    </location>
</feature>
<feature type="topological domain" description="Extracellular" evidence="14">
    <location>
        <begin position="317"/>
        <end position="343"/>
    </location>
</feature>
<feature type="transmembrane region" description="Helical" evidence="4">
    <location>
        <begin position="344"/>
        <end position="364"/>
    </location>
</feature>
<feature type="topological domain" description="Cytoplasmic" evidence="14">
    <location>
        <begin position="365"/>
        <end position="380"/>
    </location>
</feature>
<feature type="transmembrane region" description="Helical" evidence="4">
    <location>
        <begin position="381"/>
        <end position="401"/>
    </location>
</feature>
<feature type="topological domain" description="Extracellular" evidence="14">
    <location>
        <begin position="402"/>
        <end position="611"/>
    </location>
</feature>
<feature type="transmembrane region" description="Helical" evidence="4">
    <location>
        <begin position="612"/>
        <end position="632"/>
    </location>
</feature>
<feature type="topological domain" description="Cytoplasmic" evidence="14">
    <location>
        <begin position="633"/>
        <end position="643"/>
    </location>
</feature>
<feature type="transmembrane region" description="Helical" evidence="4">
    <location>
        <begin position="644"/>
        <end position="664"/>
    </location>
</feature>
<feature type="topological domain" description="Extracellular" evidence="14">
    <location>
        <begin position="665"/>
        <end position="674"/>
    </location>
</feature>
<feature type="transmembrane region" description="Helical" evidence="4">
    <location>
        <begin position="675"/>
        <end position="695"/>
    </location>
</feature>
<feature type="topological domain" description="Cytoplasmic" evidence="14">
    <location>
        <begin position="696"/>
        <end position="729"/>
    </location>
</feature>
<feature type="region of interest" description="Disordered" evidence="6">
    <location>
        <begin position="1"/>
        <end position="34"/>
    </location>
</feature>
<feature type="region of interest" description="Extracellular domain (ECD)" evidence="2">
    <location>
        <begin position="402"/>
        <end position="611"/>
    </location>
</feature>
<feature type="compositionally biased region" description="Pro residues" evidence="6">
    <location>
        <begin position="24"/>
        <end position="33"/>
    </location>
</feature>
<feature type="modified residue" description="Phosphoserine" evidence="3">
    <location>
        <position position="9"/>
    </location>
</feature>
<feature type="modified residue" description="Phosphothreonine" evidence="3">
    <location>
        <position position="12"/>
    </location>
</feature>
<feature type="modified residue" description="Phosphoserine" evidence="2">
    <location>
        <position position="28"/>
    </location>
</feature>
<feature type="glycosylation site" description="N-linked (GlcNAc...) asparagine" evidence="5">
    <location>
        <position position="435"/>
    </location>
</feature>
<feature type="glycosylation site" description="N-linked (GlcNAc...) asparagine" evidence="5">
    <location>
        <position position="472"/>
    </location>
</feature>
<feature type="glycosylation site" description="N-linked (GlcNAc...) asparagine" evidence="5">
    <location>
        <position position="528"/>
    </location>
</feature>
<feature type="glycosylation site" description="N-linked (GlcNAc...) asparagine" evidence="5">
    <location>
        <position position="567"/>
    </location>
</feature>
<feature type="glycosylation site" description="N-linked (GlcNAc...) asparagine" evidence="5">
    <location>
        <position position="587"/>
    </location>
</feature>
<feature type="splice variant" id="VSP_043084" description="In isoform 2." evidence="12">
    <location>
        <begin position="113"/>
        <end position="143"/>
    </location>
</feature>
<feature type="sequence variant" id="VAR_047001" description="In dbSNP:rs1920305.">
    <original>R</original>
    <variation>H</variation>
    <location>
        <position position="57"/>
    </location>
</feature>
<feature type="sequence variant" id="VAR_047002" description="In dbSNP:rs1143667.">
    <original>Y</original>
    <variation>C</variation>
    <location>
        <position position="73"/>
    </location>
</feature>
<feature type="sequence variant" id="VAR_047003" description="In hPEPT2*2; dbSNP:rs2257212." evidence="8">
    <original>L</original>
    <variation>F</variation>
    <location>
        <position position="350"/>
    </location>
</feature>
<feature type="sequence variant" id="VAR_047004" description="In hPEPT2*2; dbSNP:rs1143671." evidence="8">
    <original>P</original>
    <variation>S</variation>
    <location>
        <position position="409"/>
    </location>
</feature>
<feature type="sequence variant" id="VAR_047005" description="In hPEPT2*2; dbSNP:rs1143672." evidence="8">
    <original>R</original>
    <variation>K</variation>
    <location>
        <position position="509"/>
    </location>
</feature>
<feature type="sequence variant" id="VAR_047006" description="In dbSNP:rs1143668.">
    <original>A</original>
    <variation>G</variation>
    <location>
        <position position="609"/>
    </location>
</feature>
<feature type="sequence variant" id="VAR_047008" description="In dbSNP:rs1920314.">
    <original>M</original>
    <variation>L</variation>
    <location>
        <position position="704"/>
    </location>
</feature>
<feature type="sequence conflict" description="In Ref. 1; AAB34388." evidence="14" ref="1">
    <original>QH</original>
    <variation>HD</variation>
    <location>
        <begin position="278"/>
        <end position="279"/>
    </location>
</feature>
<feature type="sequence conflict" description="In Ref. 1; AAB34388." evidence="14" ref="1">
    <original>A</original>
    <variation>R</variation>
    <location>
        <position position="396"/>
    </location>
</feature>
<feature type="sequence conflict" description="In Ref. 1; AAB34388." evidence="14" ref="1">
    <original>A</original>
    <variation>R</variation>
    <location>
        <position position="609"/>
    </location>
</feature>
<feature type="strand" evidence="16">
    <location>
        <begin position="724"/>
        <end position="728"/>
    </location>
</feature>
<gene>
    <name evidence="15" type="primary">SLC15A2</name>
    <name evidence="13" type="synonym">PEPT2</name>
</gene>
<protein>
    <recommendedName>
        <fullName evidence="14">Solute carrier family 15 member 2</fullName>
    </recommendedName>
    <alternativeName>
        <fullName evidence="1">Kidney H(+)/peptide cotransporter</fullName>
    </alternativeName>
    <alternativeName>
        <fullName evidence="1">Oligopeptide transporter, kidney isoform</fullName>
    </alternativeName>
    <alternativeName>
        <fullName evidence="13">Peptide transporter 2</fullName>
    </alternativeName>
</protein>
<keyword id="KW-0002">3D-structure</keyword>
<keyword id="KW-0025">Alternative splicing</keyword>
<keyword id="KW-1003">Cell membrane</keyword>
<keyword id="KW-0968">Cytoplasmic vesicle</keyword>
<keyword id="KW-0325">Glycoprotein</keyword>
<keyword id="KW-0391">Immunity</keyword>
<keyword id="KW-0399">Innate immunity</keyword>
<keyword id="KW-0472">Membrane</keyword>
<keyword id="KW-0571">Peptide transport</keyword>
<keyword id="KW-0597">Phosphoprotein</keyword>
<keyword id="KW-0653">Protein transport</keyword>
<keyword id="KW-1267">Proteomics identification</keyword>
<keyword id="KW-1185">Reference proteome</keyword>
<keyword id="KW-0769">Symport</keyword>
<keyword id="KW-0812">Transmembrane</keyword>
<keyword id="KW-1133">Transmembrane helix</keyword>
<keyword id="KW-0813">Transport</keyword>
<evidence type="ECO:0000250" key="1">
    <source>
        <dbReference type="UniProtKB" id="P46029"/>
    </source>
</evidence>
<evidence type="ECO:0000250" key="2">
    <source>
        <dbReference type="UniProtKB" id="Q63424"/>
    </source>
</evidence>
<evidence type="ECO:0000250" key="3">
    <source>
        <dbReference type="UniProtKB" id="Q9ES07"/>
    </source>
</evidence>
<evidence type="ECO:0000255" key="4"/>
<evidence type="ECO:0000255" key="5">
    <source>
        <dbReference type="PROSITE-ProRule" id="PRU00498"/>
    </source>
</evidence>
<evidence type="ECO:0000256" key="6">
    <source>
        <dbReference type="SAM" id="MobiDB-lite"/>
    </source>
</evidence>
<evidence type="ECO:0000269" key="7">
    <source>
    </source>
</evidence>
<evidence type="ECO:0000269" key="8">
    <source>
    </source>
</evidence>
<evidence type="ECO:0000269" key="9">
    <source>
    </source>
</evidence>
<evidence type="ECO:0000269" key="10">
    <source>
    </source>
</evidence>
<evidence type="ECO:0000269" key="11">
    <source>
    </source>
</evidence>
<evidence type="ECO:0000303" key="12">
    <source>
    </source>
</evidence>
<evidence type="ECO:0000303" key="13">
    <source>
    </source>
</evidence>
<evidence type="ECO:0000305" key="14"/>
<evidence type="ECO:0000312" key="15">
    <source>
        <dbReference type="HGNC" id="HGNC:10921"/>
    </source>
</evidence>
<evidence type="ECO:0007829" key="16">
    <source>
        <dbReference type="PDB" id="6EZI"/>
    </source>
</evidence>
<name>S15A2_HUMAN</name>
<comment type="function">
    <text evidence="1 2 3 7 8 9 10 11">Proton-coupled amino-acid transporter that transports oligopeptides of 2 to 4 amino acids with a preference for dipeptides (PubMed:16434549, PubMed:18367661, PubMed:7756356). Transports neutral and anionic dipeptides with a proton to peptide stoichiometry of 2:1 or 3:1 (By similarity). In kidney, involved in the absorption of circulating di- and tripeptides from the glomerular filtrate (PubMed:7756356). Can also transport beta-lactam antibiotics, such as the aminocephalosporin cefadroxil, and other antiviral and anticancer drugs (PubMed:16434549). Transports the dipeptide-like aminopeptidase inhibitor bestatin (By similarity). Also able to transport carnosine (PubMed:31073693). Involved in innate immunity by promoting the detection of microbial pathogens by NOD-like receptors (NLRs) (By similarity). Mediates transport of bacterial peptidoglycans across the plasma membrane or, in macrophages, the phagosome membrane: catalyzes the transport of certain bacterial peptidoglycans, such as muramyl dipeptide (MDP), the NOD2 ligand (PubMed:20406817).</text>
</comment>
<comment type="catalytic activity">
    <reaction evidence="7 8">
        <text>a dipeptide(out) + 2 H(+)(out) = a dipeptide(in) + 2 H(+)(in)</text>
        <dbReference type="Rhea" id="RHEA:76179"/>
        <dbReference type="ChEBI" id="CHEBI:15378"/>
        <dbReference type="ChEBI" id="CHEBI:90799"/>
    </reaction>
    <physiologicalReaction direction="left-to-right" evidence="8">
        <dbReference type="Rhea" id="RHEA:76180"/>
    </physiologicalReaction>
</comment>
<comment type="catalytic activity">
    <reaction evidence="9">
        <text>N-acetyl-D-muramoyl-L-alanyl-D-isoglutamine(out) + 3 H(+)(out) = N-acetyl-D-muramoyl-L-alanyl-D-isoglutamine(in) + 3 H(+)(in)</text>
        <dbReference type="Rhea" id="RHEA:76375"/>
        <dbReference type="ChEBI" id="CHEBI:15378"/>
        <dbReference type="ChEBI" id="CHEBI:155830"/>
    </reaction>
    <physiologicalReaction direction="left-to-right" evidence="9">
        <dbReference type="Rhea" id="RHEA:76376"/>
    </physiologicalReaction>
</comment>
<comment type="catalytic activity">
    <reaction evidence="2">
        <text>glycyl-L-leucine(out) + 2 H(+)(out) = glycyl-L-leucine(in) + 2 H(+)(in)</text>
        <dbReference type="Rhea" id="RHEA:76167"/>
        <dbReference type="ChEBI" id="CHEBI:15378"/>
        <dbReference type="ChEBI" id="CHEBI:143163"/>
    </reaction>
    <physiologicalReaction direction="left-to-right" evidence="2">
        <dbReference type="Rhea" id="RHEA:76168"/>
    </physiologicalReaction>
</comment>
<comment type="catalytic activity">
    <reaction evidence="2">
        <text>glycyl-L-lysine(out) + 2 H(+)(out) = glycyl-L-lysine(in) + 2 H(+)(in)</text>
        <dbReference type="Rhea" id="RHEA:76171"/>
        <dbReference type="ChEBI" id="CHEBI:15378"/>
        <dbReference type="ChEBI" id="CHEBI:194323"/>
    </reaction>
    <physiologicalReaction direction="left-to-right" evidence="2">
        <dbReference type="Rhea" id="RHEA:76172"/>
    </physiologicalReaction>
</comment>
<comment type="catalytic activity">
    <reaction evidence="2">
        <text>glycyl-L-glutamate(out) + 3 H(+)(out) = glycyl-L-glutamate(in) + 3 H(+)(in)</text>
        <dbReference type="Rhea" id="RHEA:76175"/>
        <dbReference type="ChEBI" id="CHEBI:15378"/>
        <dbReference type="ChEBI" id="CHEBI:73784"/>
    </reaction>
    <physiologicalReaction direction="left-to-right" evidence="2">
        <dbReference type="Rhea" id="RHEA:76176"/>
    </physiologicalReaction>
</comment>
<comment type="catalytic activity">
    <reaction evidence="2">
        <text>L-alanyl-L-alanine(out) + 2 H(+)(out) = L-alanyl-L-alanine(in) + 2 H(+)(in)</text>
        <dbReference type="Rhea" id="RHEA:76183"/>
        <dbReference type="ChEBI" id="CHEBI:15378"/>
        <dbReference type="ChEBI" id="CHEBI:195181"/>
    </reaction>
    <physiologicalReaction direction="left-to-right" evidence="2">
        <dbReference type="Rhea" id="RHEA:76184"/>
    </physiologicalReaction>
</comment>
<comment type="catalytic activity">
    <reaction evidence="2">
        <text>an L-amino acid tripeptide(out) + 2 H(+)(out) = an L-amino acid tripeptide(in) + 2 H(+)(in)</text>
        <dbReference type="Rhea" id="RHEA:76187"/>
        <dbReference type="ChEBI" id="CHEBI:15378"/>
        <dbReference type="ChEBI" id="CHEBI:155837"/>
    </reaction>
    <physiologicalReaction direction="left-to-right" evidence="2">
        <dbReference type="Rhea" id="RHEA:76188"/>
    </physiologicalReaction>
</comment>
<comment type="catalytic activity">
    <reaction evidence="10">
        <text>carnosine(out) + 2 H(+)(out) = carnosine(in) + 2 H(+)(in)</text>
        <dbReference type="Rhea" id="RHEA:76191"/>
        <dbReference type="ChEBI" id="CHEBI:15378"/>
        <dbReference type="ChEBI" id="CHEBI:57485"/>
    </reaction>
    <physiologicalReaction direction="left-to-right" evidence="10">
        <dbReference type="Rhea" id="RHEA:76192"/>
    </physiologicalReaction>
</comment>
<comment type="biophysicochemical properties">
    <kinetics>
        <KM evidence="7">1.04 mM for amoxicillin</KM>
        <KM evidence="7">70.2 uM for cefaclor</KM>
    </kinetics>
    <phDependence>
        <text evidence="7">Optimum pH is 6.</text>
    </phDependence>
</comment>
<comment type="subunit">
    <text evidence="2">Interacts (via extracellular domain region) with trypsin.</text>
</comment>
<comment type="interaction">
    <interactant intactId="EBI-12806032">
        <id>Q16348</id>
    </interactant>
    <interactant intactId="EBI-12006944">
        <id>O43184-4</id>
        <label>ADAM12</label>
    </interactant>
    <organismsDiffer>false</organismsDiffer>
    <experiments>3</experiments>
</comment>
<comment type="interaction">
    <interactant intactId="EBI-12806032">
        <id>Q16348</id>
    </interactant>
    <interactant intactId="EBI-11954519">
        <id>Q49AR9</id>
        <label>ANKS1A</label>
    </interactant>
    <organismsDiffer>false</organismsDiffer>
    <experiments>3</experiments>
</comment>
<comment type="interaction">
    <interactant intactId="EBI-12806032">
        <id>Q16348</id>
    </interactant>
    <interactant intactId="EBI-745213">
        <id>P29972</id>
        <label>AQP1</label>
    </interactant>
    <organismsDiffer>false</organismsDiffer>
    <experiments>3</experiments>
</comment>
<comment type="interaction">
    <interactant intactId="EBI-12806032">
        <id>Q16348</id>
    </interactant>
    <interactant intactId="EBI-6660291">
        <id>Q6NUJ2</id>
        <label>C11orf87</label>
    </interactant>
    <organismsDiffer>false</organismsDiffer>
    <experiments>3</experiments>
</comment>
<comment type="interaction">
    <interactant intactId="EBI-12806032">
        <id>Q16348</id>
    </interactant>
    <interactant intactId="EBI-947551">
        <id>Q9H2X0</id>
        <label>CHRD</label>
    </interactant>
    <organismsDiffer>false</organismsDiffer>
    <experiments>3</experiments>
</comment>
<comment type="interaction">
    <interactant intactId="EBI-12806032">
        <id>Q16348</id>
    </interactant>
    <interactant intactId="EBI-744099">
        <id>Q9H0I2</id>
        <label>ENKD1</label>
    </interactant>
    <organismsDiffer>false</organismsDiffer>
    <experiments>3</experiments>
</comment>
<comment type="interaction">
    <interactant intactId="EBI-12806032">
        <id>Q16348</id>
    </interactant>
    <interactant intactId="EBI-6426443">
        <id>Q2WGJ6</id>
        <label>KLHL38</label>
    </interactant>
    <organismsDiffer>false</organismsDiffer>
    <experiments>3</experiments>
</comment>
<comment type="interaction">
    <interactant intactId="EBI-12806032">
        <id>Q16348</id>
    </interactant>
    <interactant intactId="EBI-10981970">
        <id>Q5T749</id>
        <label>KPRP</label>
    </interactant>
    <organismsDiffer>false</organismsDiffer>
    <experiments>3</experiments>
</comment>
<comment type="interaction">
    <interactant intactId="EBI-12806032">
        <id>Q16348</id>
    </interactant>
    <interactant intactId="EBI-1047093">
        <id>O76011</id>
        <label>KRT34</label>
    </interactant>
    <organismsDiffer>false</organismsDiffer>
    <experiments>3</experiments>
</comment>
<comment type="interaction">
    <interactant intactId="EBI-12806032">
        <id>Q16348</id>
    </interactant>
    <interactant intactId="EBI-10176379">
        <id>P59991</id>
        <label>KRTAP12-2</label>
    </interactant>
    <organismsDiffer>false</organismsDiffer>
    <experiments>3</experiments>
</comment>
<comment type="interaction">
    <interactant intactId="EBI-12806032">
        <id>Q16348</id>
    </interactant>
    <interactant intactId="EBI-11953334">
        <id>P60328</id>
        <label>KRTAP12-3</label>
    </interactant>
    <organismsDiffer>false</organismsDiffer>
    <experiments>3</experiments>
</comment>
<comment type="interaction">
    <interactant intactId="EBI-12806032">
        <id>Q16348</id>
    </interactant>
    <interactant intactId="EBI-11992140">
        <id>Q3LI76</id>
        <label>KRTAP15-1</label>
    </interactant>
    <organismsDiffer>false</organismsDiffer>
    <experiments>3</experiments>
</comment>
<comment type="interaction">
    <interactant intactId="EBI-12806032">
        <id>Q16348</id>
    </interactant>
    <interactant intactId="EBI-3957672">
        <id>Q6PEX3</id>
        <label>KRTAP26-1</label>
    </interactant>
    <organismsDiffer>false</organismsDiffer>
    <experiments>3</experiments>
</comment>
<comment type="interaction">
    <interactant intactId="EBI-12806032">
        <id>Q16348</id>
    </interactant>
    <interactant intactId="EBI-22311199">
        <id>Q3LI67</id>
        <label>KRTAP6-3</label>
    </interactant>
    <organismsDiffer>false</organismsDiffer>
    <experiments>3</experiments>
</comment>
<comment type="interaction">
    <interactant intactId="EBI-12806032">
        <id>Q16348</id>
    </interactant>
    <interactant intactId="EBI-2798728">
        <id>P61968</id>
        <label>LMO4</label>
    </interactant>
    <organismsDiffer>false</organismsDiffer>
    <experiments>3</experiments>
</comment>
<comment type="interaction">
    <interactant intactId="EBI-12806032">
        <id>Q16348</id>
    </interactant>
    <interactant intactId="EBI-741158">
        <id>Q96HA8</id>
        <label>NTAQ1</label>
    </interactant>
    <organismsDiffer>false</organismsDiffer>
    <experiments>3</experiments>
</comment>
<comment type="interaction">
    <interactant intactId="EBI-12806032">
        <id>Q16348</id>
    </interactant>
    <interactant intactId="EBI-740446">
        <id>P32242</id>
        <label>OTX1</label>
    </interactant>
    <organismsDiffer>false</organismsDiffer>
    <experiments>3</experiments>
</comment>
<comment type="interaction">
    <interactant intactId="EBI-12806032">
        <id>Q16348</id>
    </interactant>
    <interactant intactId="EBI-748265">
        <id>P78337</id>
        <label>PITX1</label>
    </interactant>
    <organismsDiffer>false</organismsDiffer>
    <experiments>3</experiments>
</comment>
<comment type="interaction">
    <interactant intactId="EBI-12806032">
        <id>Q16348</id>
    </interactant>
    <interactant intactId="EBI-769257">
        <id>Q9NRQ2</id>
        <label>PLSCR4</label>
    </interactant>
    <organismsDiffer>false</organismsDiffer>
    <experiments>3</experiments>
</comment>
<comment type="interaction">
    <interactant intactId="EBI-12806032">
        <id>Q16348</id>
    </interactant>
    <interactant intactId="EBI-355653">
        <id>Q92922</id>
        <label>SMARCC1</label>
    </interactant>
    <organismsDiffer>false</organismsDiffer>
    <experiments>3</experiments>
</comment>
<comment type="interaction">
    <interactant intactId="EBI-12806032">
        <id>Q16348</id>
    </interactant>
    <interactant intactId="EBI-752030">
        <id>Q96A09</id>
        <label>TENT5B</label>
    </interactant>
    <organismsDiffer>false</organismsDiffer>
    <experiments>3</experiments>
</comment>
<comment type="interaction">
    <interactant intactId="EBI-12806032">
        <id>Q16348</id>
    </interactant>
    <interactant intactId="EBI-3939165">
        <id>O43711</id>
        <label>TLX3</label>
    </interactant>
    <organismsDiffer>false</organismsDiffer>
    <experiments>3</experiments>
</comment>
<comment type="interaction">
    <interactant intactId="EBI-12806032">
        <id>Q16348</id>
    </interactant>
    <interactant intactId="EBI-10191303">
        <id>O95231</id>
        <label>VENTX</label>
    </interactant>
    <organismsDiffer>false</organismsDiffer>
    <experiments>3</experiments>
</comment>
<comment type="interaction">
    <interactant intactId="EBI-12806032">
        <id>Q16348</id>
    </interactant>
    <interactant intactId="EBI-12040603">
        <id>Q9NZC7-5</id>
        <label>WWOX</label>
    </interactant>
    <organismsDiffer>false</organismsDiffer>
    <experiments>3</experiments>
</comment>
<comment type="subcellular location">
    <subcellularLocation>
        <location evidence="2">Apical cell membrane</location>
        <topology evidence="4">Multi-pass membrane protein</topology>
    </subcellularLocation>
    <subcellularLocation>
        <location evidence="9">Cytoplasmic vesicle</location>
        <location evidence="9">Phagosome membrane</location>
        <topology evidence="4">Multi-pass membrane protein</topology>
    </subcellularLocation>
    <subcellularLocation>
        <location evidence="9">Cell membrane</location>
        <topology evidence="4">Multi-pass membrane protein</topology>
    </subcellularLocation>
    <text evidence="9">Associated with the cell membrane in resting macrophages and enriched in phagocytic cups and phagosomes after particle internalization.</text>
</comment>
<comment type="alternative products">
    <event type="alternative splicing"/>
    <isoform>
        <id>Q16348-1</id>
        <name>1</name>
        <sequence type="displayed"/>
    </isoform>
    <isoform>
        <id>Q16348-2</id>
        <name>2</name>
        <sequence type="described" ref="VSP_043084"/>
    </isoform>
</comment>
<comment type="tissue specificity">
    <text evidence="9 11">Expressed in kidney (PubMed:7756356). Not detected in intestine (PubMed:7756356). Highly expressed in macrophages (PubMed:20406817).</text>
</comment>
<comment type="domain">
    <text evidence="2">The extracellular domain (ECD) region specifically binds trypsin.</text>
</comment>
<comment type="polymorphism">
    <text evidence="8">SLC15A2 is polymmorphic and has two main variants that differ in three amino acid positions, hPEPT2*1 and hPEPT2*2. They are distributed evenly among the population and don't show functional differences.</text>
</comment>
<comment type="similarity">
    <text evidence="14">Belongs to the major facilitator superfamily. Proton-dependent oligopeptide transporter (POT/PTR) (TC 2.A.17) family.</text>
</comment>
<dbReference type="EMBL" id="S78203">
    <property type="protein sequence ID" value="AAB34388.1"/>
    <property type="molecule type" value="mRNA"/>
</dbReference>
<dbReference type="EMBL" id="AK289820">
    <property type="protein sequence ID" value="BAF82509.1"/>
    <property type="molecule type" value="mRNA"/>
</dbReference>
<dbReference type="EMBL" id="AK304189">
    <property type="protein sequence ID" value="BAG65069.1"/>
    <property type="molecule type" value="mRNA"/>
</dbReference>
<dbReference type="EMBL" id="AC072031">
    <property type="status" value="NOT_ANNOTATED_CDS"/>
    <property type="molecule type" value="Genomic_DNA"/>
</dbReference>
<dbReference type="EMBL" id="CH471052">
    <property type="protein sequence ID" value="EAW79496.1"/>
    <property type="molecule type" value="Genomic_DNA"/>
</dbReference>
<dbReference type="CCDS" id="CCDS3007.1">
    <molecule id="Q16348-1"/>
</dbReference>
<dbReference type="CCDS" id="CCDS54631.1">
    <molecule id="Q16348-2"/>
</dbReference>
<dbReference type="PIR" id="I52481">
    <property type="entry name" value="I52481"/>
</dbReference>
<dbReference type="RefSeq" id="NP_001139470.1">
    <molecule id="Q16348-2"/>
    <property type="nucleotide sequence ID" value="NM_001145998.2"/>
</dbReference>
<dbReference type="RefSeq" id="NP_066568.3">
    <molecule id="Q16348-1"/>
    <property type="nucleotide sequence ID" value="NM_021082.3"/>
</dbReference>
<dbReference type="PDB" id="6EZI">
    <property type="method" value="X-ray"/>
    <property type="resolution" value="1.50 A"/>
    <property type="chains" value="B=720-729"/>
</dbReference>
<dbReference type="PDB" id="7PMY">
    <property type="method" value="EM"/>
    <property type="resolution" value="3.80 A"/>
    <property type="chains" value="A=1-729"/>
</dbReference>
<dbReference type="PDBsum" id="6EZI"/>
<dbReference type="PDBsum" id="7PMY"/>
<dbReference type="EMDB" id="EMD-13544"/>
<dbReference type="SMR" id="Q16348"/>
<dbReference type="BioGRID" id="112453">
    <property type="interactions" value="27"/>
</dbReference>
<dbReference type="FunCoup" id="Q16348">
    <property type="interactions" value="94"/>
</dbReference>
<dbReference type="IntAct" id="Q16348">
    <property type="interactions" value="27"/>
</dbReference>
<dbReference type="MINT" id="Q16348"/>
<dbReference type="STRING" id="9606.ENSP00000417085"/>
<dbReference type="BindingDB" id="Q16348"/>
<dbReference type="ChEMBL" id="CHEMBL1743125"/>
<dbReference type="DrugBank" id="DB00855">
    <property type="generic name" value="Aminolevulinic acid"/>
</dbReference>
<dbReference type="DrugBank" id="DB01060">
    <property type="generic name" value="Amoxicillin"/>
</dbReference>
<dbReference type="DrugBank" id="DB00415">
    <property type="generic name" value="Ampicillin"/>
</dbReference>
<dbReference type="DrugBank" id="DB08795">
    <property type="generic name" value="Azidocillin"/>
</dbReference>
<dbReference type="DrugBank" id="DB00542">
    <property type="generic name" value="Benazepril"/>
</dbReference>
<dbReference type="DrugBank" id="DB01053">
    <property type="generic name" value="Benzylpenicillin"/>
</dbReference>
<dbReference type="DrugBank" id="DB00833">
    <property type="generic name" value="Cefaclor"/>
</dbReference>
<dbReference type="DrugBank" id="DB01140">
    <property type="generic name" value="Cefadroxil"/>
</dbReference>
<dbReference type="DrugBank" id="DB00456">
    <property type="generic name" value="Cefalotin"/>
</dbReference>
<dbReference type="DrugBank" id="DB00535">
    <property type="generic name" value="Cefdinir"/>
</dbReference>
<dbReference type="DrugBank" id="DB01413">
    <property type="generic name" value="Cefepime"/>
</dbReference>
<dbReference type="DrugBank" id="DB00671">
    <property type="generic name" value="Cefixime"/>
</dbReference>
<dbReference type="DrugBank" id="DB00274">
    <property type="generic name" value="Cefmetazole"/>
</dbReference>
<dbReference type="DrugBank" id="DB00493">
    <property type="generic name" value="Cefotaxime"/>
</dbReference>
<dbReference type="DrugBank" id="DB01333">
    <property type="generic name" value="Cefradine"/>
</dbReference>
<dbReference type="DrugBank" id="DB01415">
    <property type="generic name" value="Ceftibuten"/>
</dbReference>
<dbReference type="DrugBank" id="DB01212">
    <property type="generic name" value="Ceftriaxone"/>
</dbReference>
<dbReference type="DrugBank" id="DB01112">
    <property type="generic name" value="Cefuroxime"/>
</dbReference>
<dbReference type="DrugBank" id="DB00567">
    <property type="generic name" value="Cephalexin"/>
</dbReference>
<dbReference type="DrugBank" id="DB00672">
    <property type="generic name" value="Chlorpropamide"/>
</dbReference>
<dbReference type="DrugBank" id="DB01340">
    <property type="generic name" value="Cilazapril"/>
</dbReference>
<dbReference type="DrugBank" id="DB01147">
    <property type="generic name" value="Cloxacillin"/>
</dbReference>
<dbReference type="DrugBank" id="DB01000">
    <property type="generic name" value="Cyclacillin"/>
</dbReference>
<dbReference type="DrugBank" id="DB00485">
    <property type="generic name" value="Dicloxacillin"/>
</dbReference>
<dbReference type="DrugBank" id="DB00492">
    <property type="generic name" value="Fosinopril"/>
</dbReference>
<dbReference type="DrugBank" id="DB01016">
    <property type="generic name" value="Glyburide"/>
</dbReference>
<dbReference type="DrugBank" id="DB00722">
    <property type="generic name" value="Lisinopril"/>
</dbReference>
<dbReference type="DrugBank" id="DB00447">
    <property type="generic name" value="Loracarbef"/>
</dbReference>
<dbReference type="DrugBank" id="DB00691">
    <property type="generic name" value="Moexipril"/>
</dbReference>
<dbReference type="DrugBank" id="DB00731">
    <property type="generic name" value="Nateglinide"/>
</dbReference>
<dbReference type="DrugBank" id="DB00713">
    <property type="generic name" value="Oxacillin"/>
</dbReference>
<dbReference type="DrugBank" id="DB00790">
    <property type="generic name" value="Perindopril"/>
</dbReference>
<dbReference type="DrugBank" id="DB00781">
    <property type="generic name" value="Polymyxin B"/>
</dbReference>
<dbReference type="DrugBank" id="DB00881">
    <property type="generic name" value="Quinapril"/>
</dbReference>
<dbReference type="DrugBank" id="DB00178">
    <property type="generic name" value="Ramipril"/>
</dbReference>
<dbReference type="DrugBank" id="DB01348">
    <property type="generic name" value="Spirapril"/>
</dbReference>
<dbReference type="DrugBank" id="DB01124">
    <property type="generic name" value="Tolbutamide"/>
</dbReference>
<dbReference type="DrugBank" id="DB00519">
    <property type="generic name" value="Trandolapril"/>
</dbReference>
<dbReference type="DrugBank" id="DB03424">
    <property type="generic name" value="Ubenimex"/>
</dbReference>
<dbReference type="DrugBank" id="DB00577">
    <property type="generic name" value="Valaciclovir"/>
</dbReference>
<dbReference type="DrugBank" id="DB01610">
    <property type="generic name" value="Valganciclovir"/>
</dbReference>
<dbReference type="DrugCentral" id="Q16348"/>
<dbReference type="GuidetoPHARMACOLOGY" id="985"/>
<dbReference type="TCDB" id="2.A.17.4.8">
    <property type="family name" value="the proton-dependent oligopeptide transporter (pot/ptr) family"/>
</dbReference>
<dbReference type="GlyCosmos" id="Q16348">
    <property type="glycosylation" value="5 sites, No reported glycans"/>
</dbReference>
<dbReference type="GlyGen" id="Q16348">
    <property type="glycosylation" value="5 sites"/>
</dbReference>
<dbReference type="iPTMnet" id="Q16348"/>
<dbReference type="PhosphoSitePlus" id="Q16348"/>
<dbReference type="BioMuta" id="SLC15A2"/>
<dbReference type="DMDM" id="209572672"/>
<dbReference type="jPOST" id="Q16348"/>
<dbReference type="MassIVE" id="Q16348"/>
<dbReference type="PaxDb" id="9606-ENSP00000417085"/>
<dbReference type="PeptideAtlas" id="Q16348"/>
<dbReference type="ProteomicsDB" id="60859">
    <molecule id="Q16348-1"/>
</dbReference>
<dbReference type="ProteomicsDB" id="60860">
    <molecule id="Q16348-2"/>
</dbReference>
<dbReference type="Antibodypedia" id="32862">
    <property type="antibodies" value="66 antibodies from 22 providers"/>
</dbReference>
<dbReference type="DNASU" id="6565"/>
<dbReference type="Ensembl" id="ENST00000295605.6">
    <molecule id="Q16348-2"/>
    <property type="protein sequence ID" value="ENSP00000295605.2"/>
    <property type="gene ID" value="ENSG00000163406.11"/>
</dbReference>
<dbReference type="Ensembl" id="ENST00000489711.6">
    <molecule id="Q16348-1"/>
    <property type="protein sequence ID" value="ENSP00000417085.1"/>
    <property type="gene ID" value="ENSG00000163406.11"/>
</dbReference>
<dbReference type="GeneID" id="6565"/>
<dbReference type="KEGG" id="hsa:6565"/>
<dbReference type="MANE-Select" id="ENST00000489711.6">
    <property type="protein sequence ID" value="ENSP00000417085.1"/>
    <property type="RefSeq nucleotide sequence ID" value="NM_021082.4"/>
    <property type="RefSeq protein sequence ID" value="NP_066568.3"/>
</dbReference>
<dbReference type="UCSC" id="uc003eep.3">
    <molecule id="Q16348-1"/>
    <property type="organism name" value="human"/>
</dbReference>
<dbReference type="AGR" id="HGNC:10921"/>
<dbReference type="CTD" id="6565"/>
<dbReference type="DisGeNET" id="6565"/>
<dbReference type="GeneCards" id="SLC15A2"/>
<dbReference type="HGNC" id="HGNC:10921">
    <property type="gene designation" value="SLC15A2"/>
</dbReference>
<dbReference type="HPA" id="ENSG00000163406">
    <property type="expression patterns" value="Tissue enhanced (cervix, epididymis, prostate)"/>
</dbReference>
<dbReference type="MIM" id="602339">
    <property type="type" value="gene"/>
</dbReference>
<dbReference type="neXtProt" id="NX_Q16348"/>
<dbReference type="OpenTargets" id="ENSG00000163406"/>
<dbReference type="PharmGKB" id="PA35812"/>
<dbReference type="VEuPathDB" id="HostDB:ENSG00000163406"/>
<dbReference type="eggNOG" id="KOG1237">
    <property type="taxonomic scope" value="Eukaryota"/>
</dbReference>
<dbReference type="GeneTree" id="ENSGT00940000156507"/>
<dbReference type="HOGENOM" id="CLU_004790_3_0_1"/>
<dbReference type="InParanoid" id="Q16348"/>
<dbReference type="OMA" id="TEDIMAN"/>
<dbReference type="OrthoDB" id="205993at2759"/>
<dbReference type="PAN-GO" id="Q16348">
    <property type="GO annotations" value="2 GO annotations based on evolutionary models"/>
</dbReference>
<dbReference type="PhylomeDB" id="Q16348"/>
<dbReference type="TreeFam" id="TF330897"/>
<dbReference type="PathwayCommons" id="Q16348"/>
<dbReference type="SignaLink" id="Q16348"/>
<dbReference type="BioGRID-ORCS" id="6565">
    <property type="hits" value="11 hits in 1149 CRISPR screens"/>
</dbReference>
<dbReference type="ChiTaRS" id="SLC15A2">
    <property type="organism name" value="human"/>
</dbReference>
<dbReference type="GeneWiki" id="SLC15A2"/>
<dbReference type="GenomeRNAi" id="6565"/>
<dbReference type="Pharos" id="Q16348">
    <property type="development level" value="Tchem"/>
</dbReference>
<dbReference type="PRO" id="PR:Q16348"/>
<dbReference type="Proteomes" id="UP000005640">
    <property type="component" value="Chromosome 3"/>
</dbReference>
<dbReference type="RNAct" id="Q16348">
    <property type="molecule type" value="protein"/>
</dbReference>
<dbReference type="Bgee" id="ENSG00000163406">
    <property type="expression patterns" value="Expressed in nasal cavity epithelium and 163 other cell types or tissues"/>
</dbReference>
<dbReference type="ExpressionAtlas" id="Q16348">
    <property type="expression patterns" value="baseline and differential"/>
</dbReference>
<dbReference type="GO" id="GO:0016324">
    <property type="term" value="C:apical plasma membrane"/>
    <property type="evidence" value="ECO:0000250"/>
    <property type="project" value="UniProtKB"/>
</dbReference>
<dbReference type="GO" id="GO:0070062">
    <property type="term" value="C:extracellular exosome"/>
    <property type="evidence" value="ECO:0007005"/>
    <property type="project" value="UniProtKB"/>
</dbReference>
<dbReference type="GO" id="GO:0030670">
    <property type="term" value="C:phagocytic vesicle membrane"/>
    <property type="evidence" value="ECO:0000314"/>
    <property type="project" value="UniProt"/>
</dbReference>
<dbReference type="GO" id="GO:0005886">
    <property type="term" value="C:plasma membrane"/>
    <property type="evidence" value="ECO:0000250"/>
    <property type="project" value="UniProtKB"/>
</dbReference>
<dbReference type="GO" id="GO:0071916">
    <property type="term" value="F:dipeptide transmembrane transporter activity"/>
    <property type="evidence" value="ECO:0000314"/>
    <property type="project" value="UniProtKB"/>
</dbReference>
<dbReference type="GO" id="GO:0015333">
    <property type="term" value="F:peptide:proton symporter activity"/>
    <property type="evidence" value="ECO:0000314"/>
    <property type="project" value="ARUK-UCL"/>
</dbReference>
<dbReference type="GO" id="GO:0042937">
    <property type="term" value="F:tripeptide transmembrane transporter activity"/>
    <property type="evidence" value="ECO:0000250"/>
    <property type="project" value="UniProtKB"/>
</dbReference>
<dbReference type="GO" id="GO:0140367">
    <property type="term" value="P:antibacterial innate immune response"/>
    <property type="evidence" value="ECO:0000314"/>
    <property type="project" value="UniProt"/>
</dbReference>
<dbReference type="GO" id="GO:0140206">
    <property type="term" value="P:dipeptide import across plasma membrane"/>
    <property type="evidence" value="ECO:0000314"/>
    <property type="project" value="UniProtKB"/>
</dbReference>
<dbReference type="GO" id="GO:0042938">
    <property type="term" value="P:dipeptide transport"/>
    <property type="evidence" value="ECO:0000250"/>
    <property type="project" value="ARUK-UCL"/>
</dbReference>
<dbReference type="GO" id="GO:0015835">
    <property type="term" value="P:peptidoglycan transport"/>
    <property type="evidence" value="ECO:0000250"/>
    <property type="project" value="UniProtKB"/>
</dbReference>
<dbReference type="GO" id="GO:0015031">
    <property type="term" value="P:protein transport"/>
    <property type="evidence" value="ECO:0007669"/>
    <property type="project" value="UniProtKB-KW"/>
</dbReference>
<dbReference type="GO" id="GO:0070424">
    <property type="term" value="P:regulation of nucleotide-binding domain, leucine rich repeat containing receptor signaling pathway"/>
    <property type="evidence" value="ECO:0000250"/>
    <property type="project" value="UniProtKB"/>
</dbReference>
<dbReference type="GO" id="GO:0070293">
    <property type="term" value="P:renal absorption"/>
    <property type="evidence" value="ECO:0000250"/>
    <property type="project" value="ARUK-UCL"/>
</dbReference>
<dbReference type="GO" id="GO:0150104">
    <property type="term" value="P:transport across blood-brain barrier"/>
    <property type="evidence" value="ECO:0000303"/>
    <property type="project" value="ARUK-UCL"/>
</dbReference>
<dbReference type="GO" id="GO:0140207">
    <property type="term" value="P:tripeptide import across plasma membrane"/>
    <property type="evidence" value="ECO:0000250"/>
    <property type="project" value="UniProtKB"/>
</dbReference>
<dbReference type="GO" id="GO:1990961">
    <property type="term" value="P:xenobiotic detoxification by transmembrane export across the plasma membrane"/>
    <property type="evidence" value="ECO:0000303"/>
    <property type="project" value="UniProtKB"/>
</dbReference>
<dbReference type="GO" id="GO:0042908">
    <property type="term" value="P:xenobiotic transport"/>
    <property type="evidence" value="ECO:0000250"/>
    <property type="project" value="ARUK-UCL"/>
</dbReference>
<dbReference type="CDD" id="cd17347">
    <property type="entry name" value="MFS_SLC15A1_2_like"/>
    <property type="match status" value="1"/>
</dbReference>
<dbReference type="FunFam" id="1.20.1250.20:FF:000049">
    <property type="entry name" value="Solute carrier family 15 member 2"/>
    <property type="match status" value="1"/>
</dbReference>
<dbReference type="FunFam" id="1.20.1250.20:FF:000158">
    <property type="entry name" value="Solute carrier family 15 member 2"/>
    <property type="match status" value="1"/>
</dbReference>
<dbReference type="Gene3D" id="1.20.1250.20">
    <property type="entry name" value="MFS general substrate transporter like domains"/>
    <property type="match status" value="2"/>
</dbReference>
<dbReference type="InterPro" id="IPR029028">
    <property type="entry name" value="Alpha/beta_knot_MTases"/>
</dbReference>
<dbReference type="InterPro" id="IPR036259">
    <property type="entry name" value="MFS_trans_sf"/>
</dbReference>
<dbReference type="InterPro" id="IPR004768">
    <property type="entry name" value="Oligopep_transport"/>
</dbReference>
<dbReference type="InterPro" id="IPR000109">
    <property type="entry name" value="POT_fam"/>
</dbReference>
<dbReference type="InterPro" id="IPR018456">
    <property type="entry name" value="PTR2_symporter_CS"/>
</dbReference>
<dbReference type="NCBIfam" id="TIGR00926">
    <property type="entry name" value="2A1704"/>
    <property type="match status" value="1"/>
</dbReference>
<dbReference type="PANTHER" id="PTHR11654">
    <property type="entry name" value="OLIGOPEPTIDE TRANSPORTER-RELATED"/>
    <property type="match status" value="1"/>
</dbReference>
<dbReference type="Pfam" id="PF00854">
    <property type="entry name" value="PTR2"/>
    <property type="match status" value="2"/>
</dbReference>
<dbReference type="SUPFAM" id="SSF75217">
    <property type="entry name" value="alpha/beta knot"/>
    <property type="match status" value="1"/>
</dbReference>
<dbReference type="SUPFAM" id="SSF103473">
    <property type="entry name" value="MFS general substrate transporter"/>
    <property type="match status" value="1"/>
</dbReference>
<dbReference type="PROSITE" id="PS01022">
    <property type="entry name" value="PTR2_1"/>
    <property type="match status" value="1"/>
</dbReference>
<dbReference type="PROSITE" id="PS01023">
    <property type="entry name" value="PTR2_2"/>
    <property type="match status" value="1"/>
</dbReference>
<proteinExistence type="evidence at protein level"/>
<sequence length="729" mass="81783">MNPFQKNESKETLFSPVSIEEVPPRPPSPPKKPSPTICGSNYPLSIAFIVVNEFCERFSYYGMKAVLILYFLYFLHWNEDTSTSIYHAFSSLCYFTPILGAAIADSWLGKFKTIIYLSLVYVLGHVIKSLGALPILGGQVVHTVLSLIGLSLIALGTGGIKPCVAAFGGDQFEEKHAEERTRYFSVFYLSINAGSLISTFITPMLRGDVQCFGEDCYALAFGVPGLLMVIALVVFAMGSKIYNKPPPEGNIVAQVFKCIWFAISNRFKNRSGDIPKRQHWLDWAAEKYPKQLIMDVKALTRVLFLYIPLPMFWALLDQQGSRWTLQAIRMNRNLGFFVLQPDQMQVLNPLLVLIFIPLFDFVIYRLVSKCGINFSSLRKMAVGMILACLAFAVAAAVEIKINEMAPAQPGPQEVFLQVLNLADDEVKVTVVGNENNSLLIESIKSFQKTPHYSKLHLKTKSQDFHFHLKYHNLSLYTEHSVQEKNWYSLVIREDGNSISSMMVKDTESRTTNGMTTVRFVNTLHKDVNISLSTDTSLNVGEDYGVSAYRTVQRGEYPAVHCRTEDKNFSLNLGLLDFGAAYLFVITNNTNQGLQAWKIEDIPANKMSIAWQLPQYALVTAGEVMFSVTGLEFSYSQAPSSMKSVLQAAWLLTIAVGNIIVLVVAQFSGLVQWAEFILFSCLLLVICLIFSIMGYYYVPVKTEDMRGPADKHIPHIQGNMIKLETKKTKL</sequence>